<protein>
    <recommendedName>
        <fullName>cAMP-dependent protein kinase regulatory subunit</fullName>
        <shortName>PKA regulatory subunit</shortName>
    </recommendedName>
</protein>
<evidence type="ECO:0000256" key="1">
    <source>
        <dbReference type="SAM" id="MobiDB-lite"/>
    </source>
</evidence>
<evidence type="ECO:0000269" key="2">
    <source>
    </source>
</evidence>
<evidence type="ECO:0000305" key="3"/>
<proteinExistence type="evidence at protein level"/>
<feature type="chain" id="PRO_0000205414" description="cAMP-dependent protein kinase regulatory subunit">
    <location>
        <begin position="1"/>
        <end position="412"/>
    </location>
</feature>
<feature type="region of interest" description="Dimerization and phosphorylation">
    <location>
        <begin position="1"/>
        <end position="142"/>
    </location>
</feature>
<feature type="region of interest" description="Disordered" evidence="1">
    <location>
        <begin position="392"/>
        <end position="412"/>
    </location>
</feature>
<feature type="short sequence motif" description="Pseudophosphorylation motif">
    <location>
        <begin position="101"/>
        <end position="105"/>
    </location>
</feature>
<feature type="binding site">
    <location>
        <begin position="143"/>
        <end position="277"/>
    </location>
    <ligand>
        <name>3',5'-cyclic AMP</name>
        <dbReference type="ChEBI" id="CHEBI:58165"/>
        <label>1</label>
        <note>high affinity</note>
    </ligand>
</feature>
<feature type="binding site">
    <location>
        <position position="224"/>
    </location>
    <ligand>
        <name>3',5'-cyclic AMP</name>
        <dbReference type="ChEBI" id="CHEBI:58165"/>
        <label>1</label>
        <note>high affinity</note>
    </ligand>
</feature>
<feature type="binding site">
    <location>
        <position position="233"/>
    </location>
    <ligand>
        <name>3',5'-cyclic AMP</name>
        <dbReference type="ChEBI" id="CHEBI:58165"/>
        <label>1</label>
        <note>high affinity</note>
    </ligand>
</feature>
<feature type="binding site">
    <location>
        <begin position="278"/>
        <end position="412"/>
    </location>
    <ligand>
        <name>3',5'-cyclic AMP</name>
        <dbReference type="ChEBI" id="CHEBI:58165"/>
        <label>2</label>
        <note>low affinity</note>
    </ligand>
</feature>
<feature type="binding site">
    <location>
        <position position="344"/>
    </location>
    <ligand>
        <name>3',5'-cyclic AMP</name>
        <dbReference type="ChEBI" id="CHEBI:58165"/>
        <label>2</label>
        <note>low affinity</note>
    </ligand>
</feature>
<feature type="binding site">
    <location>
        <position position="353"/>
    </location>
    <ligand>
        <name>3',5'-cyclic AMP</name>
        <dbReference type="ChEBI" id="CHEBI:58165"/>
        <label>2</label>
        <note>low affinity</note>
    </ligand>
</feature>
<feature type="modified residue" description="Phosphoserine" evidence="2">
    <location>
        <position position="104"/>
    </location>
</feature>
<feature type="sequence conflict" description="In Ref. 1; AAB20314." evidence="3" ref="1">
    <original>E</original>
    <variation>Q</variation>
    <location>
        <position position="274"/>
    </location>
</feature>
<feature type="sequence conflict" description="In Ref. 1; AAB20314." evidence="3" ref="1">
    <original>Q</original>
    <variation>L</variation>
    <location>
        <position position="295"/>
    </location>
</feature>
<feature type="sequence conflict" description="In Ref. 1; AAB20314." evidence="3" ref="1">
    <location>
        <position position="326"/>
    </location>
</feature>
<feature type="sequence conflict" description="In Ref. 1; AAB20314." evidence="3" ref="1">
    <original>L</original>
    <variation>Q</variation>
    <location>
        <position position="336"/>
    </location>
</feature>
<feature type="sequence conflict" description="In Ref. 1; AAB20314." evidence="3" ref="1">
    <original>T</original>
    <variation>P</variation>
    <location>
        <position position="356"/>
    </location>
</feature>
<feature type="sequence conflict" description="In Ref. 1; AAB20314." evidence="3" ref="1">
    <original>E</original>
    <variation>K</variation>
    <location>
        <position position="397"/>
    </location>
</feature>
<gene>
    <name type="primary">cgs1</name>
    <name type="ORF">SPAC8C9.03</name>
</gene>
<accession>P36600</accession>
<accession>O14272</accession>
<sequence>MSFEEVYEELKALVDEQNPSDVLQFCYDFFGEKLKAERSVFRRGDTITESFSDGDESDFLSELNDMVAGPEAIGPDAKYVPELGGLKEMNVSYPQNYNLLRRQSVSTESMNPSAFALETKRTFPPKDPEDLKRLKRSVAGNFLFKNLDEEHYNEVLNAMTEKRIGEAGVAVIVQGAVGDYFYIVEQGEFDVYKRPELNITPEEVLSSGYGNYITTISPGEYFGELALMYNAPRAASVVSKTPNNVIYALDRTSFRRIVFENAYRQRMLYESLLEEVPILSSLDKYQRQKIADALQTVVYQAGSIVIRQGDIGNQFYLIEDGEAEVVKNGKGVVVTLTKGDYFGELALIHETVRNATVQAKTRLKLATFDKPTFNRLLGNAIDLMRNQPRARMGMDNEYGDQSLHRSPPSTKA</sequence>
<organism>
    <name type="scientific">Schizosaccharomyces pombe (strain 972 / ATCC 24843)</name>
    <name type="common">Fission yeast</name>
    <dbReference type="NCBI Taxonomy" id="284812"/>
    <lineage>
        <taxon>Eukaryota</taxon>
        <taxon>Fungi</taxon>
        <taxon>Dikarya</taxon>
        <taxon>Ascomycota</taxon>
        <taxon>Taphrinomycotina</taxon>
        <taxon>Schizosaccharomycetes</taxon>
        <taxon>Schizosaccharomycetales</taxon>
        <taxon>Schizosaccharomycetaceae</taxon>
        <taxon>Schizosaccharomyces</taxon>
    </lineage>
</organism>
<keyword id="KW-0114">cAMP</keyword>
<keyword id="KW-0116">cAMP-binding</keyword>
<keyword id="KW-0547">Nucleotide-binding</keyword>
<keyword id="KW-0597">Phosphoprotein</keyword>
<keyword id="KW-1185">Reference proteome</keyword>
<keyword id="KW-0677">Repeat</keyword>
<reference key="1">
    <citation type="journal article" date="1991" name="EMBO J.">
        <title>Interaction between ran1+ protein kinase and cAMP dependent protein kinase as negative regulators of fission yeast meiosis.</title>
        <authorList>
            <person name="Devoti J."/>
            <person name="Seydoux G."/>
            <person name="Beach D."/>
            <person name="McLeod M."/>
        </authorList>
    </citation>
    <scope>NUCLEOTIDE SEQUENCE [GENOMIC DNA]</scope>
</reference>
<reference key="2">
    <citation type="journal article" date="2002" name="Nature">
        <title>The genome sequence of Schizosaccharomyces pombe.</title>
        <authorList>
            <person name="Wood V."/>
            <person name="Gwilliam R."/>
            <person name="Rajandream M.A."/>
            <person name="Lyne M.H."/>
            <person name="Lyne R."/>
            <person name="Stewart A."/>
            <person name="Sgouros J.G."/>
            <person name="Peat N."/>
            <person name="Hayles J."/>
            <person name="Baker S.G."/>
            <person name="Basham D."/>
            <person name="Bowman S."/>
            <person name="Brooks K."/>
            <person name="Brown D."/>
            <person name="Brown S."/>
            <person name="Chillingworth T."/>
            <person name="Churcher C.M."/>
            <person name="Collins M."/>
            <person name="Connor R."/>
            <person name="Cronin A."/>
            <person name="Davis P."/>
            <person name="Feltwell T."/>
            <person name="Fraser A."/>
            <person name="Gentles S."/>
            <person name="Goble A."/>
            <person name="Hamlin N."/>
            <person name="Harris D.E."/>
            <person name="Hidalgo J."/>
            <person name="Hodgson G."/>
            <person name="Holroyd S."/>
            <person name="Hornsby T."/>
            <person name="Howarth S."/>
            <person name="Huckle E.J."/>
            <person name="Hunt S."/>
            <person name="Jagels K."/>
            <person name="James K.D."/>
            <person name="Jones L."/>
            <person name="Jones M."/>
            <person name="Leather S."/>
            <person name="McDonald S."/>
            <person name="McLean J."/>
            <person name="Mooney P."/>
            <person name="Moule S."/>
            <person name="Mungall K.L."/>
            <person name="Murphy L.D."/>
            <person name="Niblett D."/>
            <person name="Odell C."/>
            <person name="Oliver K."/>
            <person name="O'Neil S."/>
            <person name="Pearson D."/>
            <person name="Quail M.A."/>
            <person name="Rabbinowitsch E."/>
            <person name="Rutherford K.M."/>
            <person name="Rutter S."/>
            <person name="Saunders D."/>
            <person name="Seeger K."/>
            <person name="Sharp S."/>
            <person name="Skelton J."/>
            <person name="Simmonds M.N."/>
            <person name="Squares R."/>
            <person name="Squares S."/>
            <person name="Stevens K."/>
            <person name="Taylor K."/>
            <person name="Taylor R.G."/>
            <person name="Tivey A."/>
            <person name="Walsh S.V."/>
            <person name="Warren T."/>
            <person name="Whitehead S."/>
            <person name="Woodward J.R."/>
            <person name="Volckaert G."/>
            <person name="Aert R."/>
            <person name="Robben J."/>
            <person name="Grymonprez B."/>
            <person name="Weltjens I."/>
            <person name="Vanstreels E."/>
            <person name="Rieger M."/>
            <person name="Schaefer M."/>
            <person name="Mueller-Auer S."/>
            <person name="Gabel C."/>
            <person name="Fuchs M."/>
            <person name="Duesterhoeft A."/>
            <person name="Fritzc C."/>
            <person name="Holzer E."/>
            <person name="Moestl D."/>
            <person name="Hilbert H."/>
            <person name="Borzym K."/>
            <person name="Langer I."/>
            <person name="Beck A."/>
            <person name="Lehrach H."/>
            <person name="Reinhardt R."/>
            <person name="Pohl T.M."/>
            <person name="Eger P."/>
            <person name="Zimmermann W."/>
            <person name="Wedler H."/>
            <person name="Wambutt R."/>
            <person name="Purnelle B."/>
            <person name="Goffeau A."/>
            <person name="Cadieu E."/>
            <person name="Dreano S."/>
            <person name="Gloux S."/>
            <person name="Lelaure V."/>
            <person name="Mottier S."/>
            <person name="Galibert F."/>
            <person name="Aves S.J."/>
            <person name="Xiang Z."/>
            <person name="Hunt C."/>
            <person name="Moore K."/>
            <person name="Hurst S.M."/>
            <person name="Lucas M."/>
            <person name="Rochet M."/>
            <person name="Gaillardin C."/>
            <person name="Tallada V.A."/>
            <person name="Garzon A."/>
            <person name="Thode G."/>
            <person name="Daga R.R."/>
            <person name="Cruzado L."/>
            <person name="Jimenez J."/>
            <person name="Sanchez M."/>
            <person name="del Rey F."/>
            <person name="Benito J."/>
            <person name="Dominguez A."/>
            <person name="Revuelta J.L."/>
            <person name="Moreno S."/>
            <person name="Armstrong J."/>
            <person name="Forsburg S.L."/>
            <person name="Cerutti L."/>
            <person name="Lowe T."/>
            <person name="McCombie W.R."/>
            <person name="Paulsen I."/>
            <person name="Potashkin J."/>
            <person name="Shpakovski G.V."/>
            <person name="Ussery D."/>
            <person name="Barrell B.G."/>
            <person name="Nurse P."/>
        </authorList>
    </citation>
    <scope>NUCLEOTIDE SEQUENCE [LARGE SCALE GENOMIC DNA]</scope>
    <source>
        <strain>972 / ATCC 24843</strain>
    </source>
</reference>
<reference key="3">
    <citation type="journal article" date="2008" name="J. Proteome Res.">
        <title>Phosphoproteome analysis of fission yeast.</title>
        <authorList>
            <person name="Wilson-Grady J.T."/>
            <person name="Villen J."/>
            <person name="Gygi S.P."/>
        </authorList>
    </citation>
    <scope>PHOSPHORYLATION [LARGE SCALE ANALYSIS] AT SER-104</scope>
    <scope>IDENTIFICATION BY MASS SPECTROMETRY</scope>
</reference>
<comment type="subunit">
    <text>Tetramer, composed of 2 regulatory (R) and 2 catalytic (C) subunits. In the presence of cAMP it dissociates into 2 active monomeric C subunits and an R dimer.</text>
</comment>
<comment type="similarity">
    <text evidence="3">Belongs to the cAMP-dependent kinase regulatory chain family.</text>
</comment>
<dbReference type="EMBL" id="S64905">
    <property type="protein sequence ID" value="AAB20314.1"/>
    <property type="molecule type" value="Genomic_DNA"/>
</dbReference>
<dbReference type="EMBL" id="CU329670">
    <property type="protein sequence ID" value="CAB16291.2"/>
    <property type="molecule type" value="Genomic_DNA"/>
</dbReference>
<dbReference type="PIR" id="S18634">
    <property type="entry name" value="S18634"/>
</dbReference>
<dbReference type="PIR" id="T39140">
    <property type="entry name" value="T39140"/>
</dbReference>
<dbReference type="RefSeq" id="NP_594274.1">
    <property type="nucleotide sequence ID" value="NM_001019697.2"/>
</dbReference>
<dbReference type="SMR" id="P36600"/>
<dbReference type="BioGRID" id="279773">
    <property type="interactions" value="22"/>
</dbReference>
<dbReference type="FunCoup" id="P36600">
    <property type="interactions" value="377"/>
</dbReference>
<dbReference type="STRING" id="284812.P36600"/>
<dbReference type="iPTMnet" id="P36600"/>
<dbReference type="PaxDb" id="4896-SPAC8C9.03.1"/>
<dbReference type="EnsemblFungi" id="SPAC8C9.03.1">
    <property type="protein sequence ID" value="SPAC8C9.03.1:pep"/>
    <property type="gene ID" value="SPAC8C9.03"/>
</dbReference>
<dbReference type="GeneID" id="2543351"/>
<dbReference type="KEGG" id="spo:2543351"/>
<dbReference type="PomBase" id="SPAC8C9.03">
    <property type="gene designation" value="cgs1"/>
</dbReference>
<dbReference type="VEuPathDB" id="FungiDB:SPAC8C9.03"/>
<dbReference type="eggNOG" id="KOG1113">
    <property type="taxonomic scope" value="Eukaryota"/>
</dbReference>
<dbReference type="HOGENOM" id="CLU_018310_0_1_1"/>
<dbReference type="InParanoid" id="P36600"/>
<dbReference type="OMA" id="WSPPHHP"/>
<dbReference type="PhylomeDB" id="P36600"/>
<dbReference type="Reactome" id="R-SPO-163615">
    <property type="pathway name" value="PKA activation"/>
</dbReference>
<dbReference type="Reactome" id="R-SPO-164378">
    <property type="pathway name" value="PKA activation in glucagon signalling"/>
</dbReference>
<dbReference type="Reactome" id="R-SPO-180024">
    <property type="pathway name" value="DARPP-32 events"/>
</dbReference>
<dbReference type="Reactome" id="R-SPO-432040">
    <property type="pathway name" value="Vasopressin regulates renal water homeostasis via Aquaporins"/>
</dbReference>
<dbReference type="Reactome" id="R-SPO-442720">
    <property type="pathway name" value="CREB1 phosphorylation through the activation of Adenylate Cyclase"/>
</dbReference>
<dbReference type="Reactome" id="R-SPO-5610787">
    <property type="pathway name" value="Hedgehog 'off' state"/>
</dbReference>
<dbReference type="Reactome" id="R-SPO-9634597">
    <property type="pathway name" value="GPER1 signaling"/>
</dbReference>
<dbReference type="Reactome" id="R-SPO-983231">
    <property type="pathway name" value="Factors involved in megakaryocyte development and platelet production"/>
</dbReference>
<dbReference type="Reactome" id="R-SPO-9856530">
    <property type="pathway name" value="High laminar flow shear stress activates signaling by PIEZO1 and PECAM1:CDH5:KDR in endothelial cells"/>
</dbReference>
<dbReference type="PRO" id="PR:P36600"/>
<dbReference type="Proteomes" id="UP000002485">
    <property type="component" value="Chromosome I"/>
</dbReference>
<dbReference type="GO" id="GO:0005952">
    <property type="term" value="C:cAMP-dependent protein kinase complex"/>
    <property type="evidence" value="ECO:0000353"/>
    <property type="project" value="PomBase"/>
</dbReference>
<dbReference type="GO" id="GO:0005737">
    <property type="term" value="C:cytoplasm"/>
    <property type="evidence" value="ECO:0000314"/>
    <property type="project" value="PomBase"/>
</dbReference>
<dbReference type="GO" id="GO:0005829">
    <property type="term" value="C:cytosol"/>
    <property type="evidence" value="ECO:0007005"/>
    <property type="project" value="PomBase"/>
</dbReference>
<dbReference type="GO" id="GO:0005634">
    <property type="term" value="C:nucleus"/>
    <property type="evidence" value="ECO:0000314"/>
    <property type="project" value="PomBase"/>
</dbReference>
<dbReference type="GO" id="GO:0030552">
    <property type="term" value="F:cAMP binding"/>
    <property type="evidence" value="ECO:0000315"/>
    <property type="project" value="PomBase"/>
</dbReference>
<dbReference type="GO" id="GO:0004862">
    <property type="term" value="F:cAMP-dependent protein kinase inhibitor activity"/>
    <property type="evidence" value="ECO:0000315"/>
    <property type="project" value="PomBase"/>
</dbReference>
<dbReference type="GO" id="GO:0034236">
    <property type="term" value="F:protein kinase A catalytic subunit binding"/>
    <property type="evidence" value="ECO:0000318"/>
    <property type="project" value="GO_Central"/>
</dbReference>
<dbReference type="GO" id="GO:0007189">
    <property type="term" value="P:adenylate cyclase-activating G protein-coupled receptor signaling pathway"/>
    <property type="evidence" value="ECO:0000315"/>
    <property type="project" value="PomBase"/>
</dbReference>
<dbReference type="GO" id="GO:0042149">
    <property type="term" value="P:cellular response to glucose starvation"/>
    <property type="evidence" value="ECO:0000314"/>
    <property type="project" value="PomBase"/>
</dbReference>
<dbReference type="GO" id="GO:0110034">
    <property type="term" value="P:negative regulation of adenylate cyclase-activating glucose-activated G protein-coupled receptor signaling pathway"/>
    <property type="evidence" value="ECO:0000305"/>
    <property type="project" value="PomBase"/>
</dbReference>
<dbReference type="GO" id="GO:0046827">
    <property type="term" value="P:positive regulation of protein export from nucleus"/>
    <property type="evidence" value="ECO:0000315"/>
    <property type="project" value="PomBase"/>
</dbReference>
<dbReference type="CDD" id="cd00038">
    <property type="entry name" value="CAP_ED"/>
    <property type="match status" value="2"/>
</dbReference>
<dbReference type="FunFam" id="2.60.120.10:FF:000039">
    <property type="entry name" value="cAMP-dependent protein kinase regulatory subunit"/>
    <property type="match status" value="1"/>
</dbReference>
<dbReference type="Gene3D" id="2.60.120.10">
    <property type="entry name" value="Jelly Rolls"/>
    <property type="match status" value="2"/>
</dbReference>
<dbReference type="InterPro" id="IPR050503">
    <property type="entry name" value="cAMP-dep_PK_reg_su-like"/>
</dbReference>
<dbReference type="InterPro" id="IPR012198">
    <property type="entry name" value="cAMP_dep_PK_reg_su"/>
</dbReference>
<dbReference type="InterPro" id="IPR003117">
    <property type="entry name" value="cAMP_dep_PK_reg_su_I/II_a/b"/>
</dbReference>
<dbReference type="InterPro" id="IPR018488">
    <property type="entry name" value="cNMP-bd_CS"/>
</dbReference>
<dbReference type="InterPro" id="IPR000595">
    <property type="entry name" value="cNMP-bd_dom"/>
</dbReference>
<dbReference type="InterPro" id="IPR018490">
    <property type="entry name" value="cNMP-bd_dom_sf"/>
</dbReference>
<dbReference type="InterPro" id="IPR014710">
    <property type="entry name" value="RmlC-like_jellyroll"/>
</dbReference>
<dbReference type="PANTHER" id="PTHR11635">
    <property type="entry name" value="CAMP-DEPENDENT PROTEIN KINASE REGULATORY CHAIN"/>
    <property type="match status" value="1"/>
</dbReference>
<dbReference type="PANTHER" id="PTHR11635:SF152">
    <property type="entry name" value="CAMP-DEPENDENT PROTEIN KINASE TYPE I REGULATORY SUBUNIT-RELATED"/>
    <property type="match status" value="1"/>
</dbReference>
<dbReference type="Pfam" id="PF00027">
    <property type="entry name" value="cNMP_binding"/>
    <property type="match status" value="2"/>
</dbReference>
<dbReference type="Pfam" id="PF02197">
    <property type="entry name" value="RIIa"/>
    <property type="match status" value="1"/>
</dbReference>
<dbReference type="PIRSF" id="PIRSF000548">
    <property type="entry name" value="PK_regulatory"/>
    <property type="match status" value="1"/>
</dbReference>
<dbReference type="PRINTS" id="PR00103">
    <property type="entry name" value="CAMPKINASE"/>
</dbReference>
<dbReference type="SMART" id="SM00100">
    <property type="entry name" value="cNMP"/>
    <property type="match status" value="2"/>
</dbReference>
<dbReference type="SMART" id="SM00394">
    <property type="entry name" value="RIIa"/>
    <property type="match status" value="1"/>
</dbReference>
<dbReference type="SUPFAM" id="SSF51206">
    <property type="entry name" value="cAMP-binding domain-like"/>
    <property type="match status" value="2"/>
</dbReference>
<dbReference type="PROSITE" id="PS00888">
    <property type="entry name" value="CNMP_BINDING_1"/>
    <property type="match status" value="2"/>
</dbReference>
<dbReference type="PROSITE" id="PS00889">
    <property type="entry name" value="CNMP_BINDING_2"/>
    <property type="match status" value="1"/>
</dbReference>
<dbReference type="PROSITE" id="PS50042">
    <property type="entry name" value="CNMP_BINDING_3"/>
    <property type="match status" value="2"/>
</dbReference>
<name>KAPR_SCHPO</name>